<organism>
    <name type="scientific">Human associated cyclovirus 1 (isolate Homo sapiens/Pakistan/PK5510/2007)</name>
    <name type="common">HuCyV-1</name>
    <name type="synonym">Cyclovirus PK5510</name>
    <dbReference type="NCBI Taxonomy" id="742918"/>
    <lineage>
        <taxon>Viruses</taxon>
        <taxon>Monodnaviria</taxon>
        <taxon>Shotokuvirae</taxon>
        <taxon>Cressdnaviricota</taxon>
        <taxon>Arfiviricetes</taxon>
        <taxon>Cirlivirales</taxon>
        <taxon>Circoviridae</taxon>
        <taxon>Cyclovirus</taxon>
        <taxon>Cyclovirus maanav</taxon>
    </lineage>
</organism>
<feature type="chain" id="PRO_0000445708" description="Replication-associated protein">
    <location>
        <begin position="1"/>
        <end position="280"/>
    </location>
</feature>
<feature type="domain" description="CRESS-DNA virus Rep endonuclease" evidence="4">
    <location>
        <begin position="3"/>
        <end position="101"/>
    </location>
</feature>
<feature type="short sequence motif" description="RCR-1" evidence="4">
    <location>
        <begin position="10"/>
        <end position="13"/>
    </location>
</feature>
<feature type="short sequence motif" description="RCR-2" evidence="4">
    <location>
        <begin position="49"/>
        <end position="51"/>
    </location>
</feature>
<feature type="short sequence motif" description="RCR-3" evidence="4">
    <location>
        <begin position="88"/>
        <end position="91"/>
    </location>
</feature>
<feature type="active site" description="For DNA cleavage activity" evidence="4">
    <location>
        <position position="88"/>
    </location>
</feature>
<feature type="binding site" evidence="3">
    <location>
        <position position="40"/>
    </location>
    <ligand>
        <name>a divalent metal cation</name>
        <dbReference type="ChEBI" id="CHEBI:60240"/>
    </ligand>
</feature>
<feature type="binding site" evidence="3">
    <location>
        <position position="49"/>
    </location>
    <ligand>
        <name>a divalent metal cation</name>
        <dbReference type="ChEBI" id="CHEBI:60240"/>
    </ligand>
</feature>
<feature type="binding site" evidence="1">
    <location>
        <begin position="166"/>
        <end position="173"/>
    </location>
    <ligand>
        <name>ATP</name>
        <dbReference type="ChEBI" id="CHEBI:30616"/>
    </ligand>
</feature>
<name>REP_HCYV5</name>
<organismHost>
    <name type="scientific">Homo sapiens</name>
    <name type="common">Human</name>
    <dbReference type="NCBI Taxonomy" id="9606"/>
</organismHost>
<dbReference type="EC" id="2.7.7.-"/>
<dbReference type="EC" id="3.1.21.-"/>
<dbReference type="EC" id="3.6.1.-"/>
<dbReference type="EMBL" id="GQ404847">
    <property type="protein sequence ID" value="ADD62457.1"/>
    <property type="molecule type" value="Genomic_DNA"/>
</dbReference>
<dbReference type="SMR" id="D4N3P2"/>
<dbReference type="OrthoDB" id="9195at10239"/>
<dbReference type="Proteomes" id="UP000146794">
    <property type="component" value="Genome"/>
</dbReference>
<dbReference type="GO" id="GO:0042025">
    <property type="term" value="C:host cell nucleus"/>
    <property type="evidence" value="ECO:0007669"/>
    <property type="project" value="UniProtKB-SubCell"/>
</dbReference>
<dbReference type="GO" id="GO:0005524">
    <property type="term" value="F:ATP binding"/>
    <property type="evidence" value="ECO:0007669"/>
    <property type="project" value="UniProtKB-KW"/>
</dbReference>
<dbReference type="GO" id="GO:0016887">
    <property type="term" value="F:ATP hydrolysis activity"/>
    <property type="evidence" value="ECO:0007669"/>
    <property type="project" value="RHEA"/>
</dbReference>
<dbReference type="GO" id="GO:0003677">
    <property type="term" value="F:DNA binding"/>
    <property type="evidence" value="ECO:0007669"/>
    <property type="project" value="UniProtKB-KW"/>
</dbReference>
<dbReference type="GO" id="GO:0004519">
    <property type="term" value="F:endonuclease activity"/>
    <property type="evidence" value="ECO:0007669"/>
    <property type="project" value="UniProtKB-KW"/>
</dbReference>
<dbReference type="GO" id="GO:0046872">
    <property type="term" value="F:metal ion binding"/>
    <property type="evidence" value="ECO:0007669"/>
    <property type="project" value="UniProtKB-KW"/>
</dbReference>
<dbReference type="GO" id="GO:0016779">
    <property type="term" value="F:nucleotidyltransferase activity"/>
    <property type="evidence" value="ECO:0007669"/>
    <property type="project" value="UniProtKB-KW"/>
</dbReference>
<dbReference type="GO" id="GO:0003723">
    <property type="term" value="F:RNA binding"/>
    <property type="evidence" value="ECO:0007669"/>
    <property type="project" value="InterPro"/>
</dbReference>
<dbReference type="GO" id="GO:0003724">
    <property type="term" value="F:RNA helicase activity"/>
    <property type="evidence" value="ECO:0007669"/>
    <property type="project" value="InterPro"/>
</dbReference>
<dbReference type="GO" id="GO:0006260">
    <property type="term" value="P:DNA replication"/>
    <property type="evidence" value="ECO:0007669"/>
    <property type="project" value="UniProtKB-KW"/>
</dbReference>
<dbReference type="Gene3D" id="3.40.1310.20">
    <property type="match status" value="1"/>
</dbReference>
<dbReference type="InterPro" id="IPR049912">
    <property type="entry name" value="CRESS_DNA_REP"/>
</dbReference>
<dbReference type="InterPro" id="IPR000605">
    <property type="entry name" value="Helicase_SF3_ssDNA/RNA_vir"/>
</dbReference>
<dbReference type="InterPro" id="IPR027417">
    <property type="entry name" value="P-loop_NTPase"/>
</dbReference>
<dbReference type="Pfam" id="PF00910">
    <property type="entry name" value="RNA_helicase"/>
    <property type="match status" value="1"/>
</dbReference>
<dbReference type="Pfam" id="PF02407">
    <property type="entry name" value="Viral_Rep"/>
    <property type="match status" value="1"/>
</dbReference>
<dbReference type="SUPFAM" id="SSF52540">
    <property type="entry name" value="P-loop containing nucleoside triphosphate hydrolases"/>
    <property type="match status" value="1"/>
</dbReference>
<dbReference type="PROSITE" id="PS52020">
    <property type="entry name" value="CRESS_DNA_REP"/>
    <property type="match status" value="1"/>
</dbReference>
<reference key="1">
    <citation type="journal article" date="2010" name="J. Virol.">
        <title>Multiple diverse circoviruses infect farm animals and are commonly found in human and chimpanzee feces.</title>
        <authorList>
            <person name="Li L."/>
            <person name="Kapoor A."/>
            <person name="Slikas B."/>
            <person name="Bamidele O.S."/>
            <person name="Wang C."/>
            <person name="Shaukat S."/>
            <person name="Masroor M.A."/>
            <person name="Wilson M.L."/>
            <person name="Ndjango J.B."/>
            <person name="Peeters M."/>
            <person name="Gross-Camp N.D."/>
            <person name="Muller M.N."/>
            <person name="Hahn B.H."/>
            <person name="Wolfe N.D."/>
            <person name="Triki H."/>
            <person name="Bartkus J."/>
            <person name="Zaidi S.Z."/>
            <person name="Delwart E."/>
        </authorList>
    </citation>
    <scope>NUCLEOTIDE SEQUENCE [LARGE SCALE GENOMIC DNA]</scope>
</reference>
<protein>
    <recommendedName>
        <fullName>Replication-associated protein</fullName>
        <shortName>Rep</shortName>
        <ecNumber>2.7.7.-</ecNumber>
        <ecNumber>3.1.21.-</ecNumber>
        <ecNumber>3.6.1.-</ecNumber>
    </recommendedName>
    <alternativeName>
        <fullName>ATP-dependent helicase Rep</fullName>
    </alternativeName>
    <alternativeName>
        <fullName>RepP</fullName>
    </alternativeName>
</protein>
<comment type="function">
    <text evidence="2">Essential for the replication of viral ssDNA. The closed circular ssDNA genome is first converted to a superhelical dsDNA. Rep and/or Rep' binds a specific hairpin at the genome origin of replication. Introduces an endonucleolytic nick within the conserved sequence 5'-AGTATTAC-3' in the intergenic region of the genome, thereby initiating the rolling circle replication (RCR). Following cleavage, binds covalently to the 5'-phosphate of DNA as a tyrosyl ester. The cleavage gives rise to a free 3'-OH that serves as a primer for the cellular DNA polymerase. The polymerase synthesizes the (+) strand DNA by rolling circle mechanism. After one round of replication, a Rep-catalyzed nucleotidyl transfer reaction releases a circular single-stranded virus genome, thereby terminating the replication. Displays origin-specific DNA cleavage, and nucleotidyl transferase.</text>
</comment>
<comment type="catalytic activity">
    <reaction>
        <text>ATP + H2O = ADP + phosphate + H(+)</text>
        <dbReference type="Rhea" id="RHEA:13065"/>
        <dbReference type="ChEBI" id="CHEBI:15377"/>
        <dbReference type="ChEBI" id="CHEBI:15378"/>
        <dbReference type="ChEBI" id="CHEBI:30616"/>
        <dbReference type="ChEBI" id="CHEBI:43474"/>
        <dbReference type="ChEBI" id="CHEBI:456216"/>
    </reaction>
</comment>
<comment type="cofactor">
    <cofactor evidence="2">
        <name>Mg(2+)</name>
        <dbReference type="ChEBI" id="CHEBI:18420"/>
    </cofactor>
    <cofactor evidence="2">
        <name>Mn(2+)</name>
        <dbReference type="ChEBI" id="CHEBI:29035"/>
    </cofactor>
    <text evidence="2">Divalent metal cations, possibly Mg(2+) or Mn(2+).</text>
</comment>
<comment type="subcellular location">
    <subcellularLocation>
        <location evidence="2">Host nucleus</location>
    </subcellularLocation>
</comment>
<comment type="domain">
    <text evidence="2">There are 3 rolling circle replication (RCR) motifs. RCR-2 is probably involved in metal coordination. RCR-3 is required for phosphodiester bond cleavage for initiation of RCR.</text>
</comment>
<comment type="similarity">
    <text evidence="5">Belongs to the nanoviruses/circoviruses replication-associated protein family.</text>
</comment>
<keyword id="KW-0067">ATP-binding</keyword>
<keyword id="KW-0190">Covalent protein-DNA linkage</keyword>
<keyword id="KW-0235">DNA replication</keyword>
<keyword id="KW-0238">DNA-binding</keyword>
<keyword id="KW-0255">Endonuclease</keyword>
<keyword id="KW-0347">Helicase</keyword>
<keyword id="KW-1048">Host nucleus</keyword>
<keyword id="KW-0378">Hydrolase</keyword>
<keyword id="KW-0479">Metal-binding</keyword>
<keyword id="KW-0511">Multifunctional enzyme</keyword>
<keyword id="KW-0540">Nuclease</keyword>
<keyword id="KW-0547">Nucleotide-binding</keyword>
<keyword id="KW-0548">Nucleotidyltransferase</keyword>
<keyword id="KW-1185">Reference proteome</keyword>
<keyword id="KW-0808">Transferase</keyword>
<gene>
    <name type="primary">Rep</name>
    <name type="ORF">ORF1</name>
</gene>
<evidence type="ECO:0000250" key="1">
    <source>
        <dbReference type="UniProtKB" id="P27260"/>
    </source>
</evidence>
<evidence type="ECO:0000250" key="2">
    <source>
        <dbReference type="UniProtKB" id="Q805H4"/>
    </source>
</evidence>
<evidence type="ECO:0000255" key="3"/>
<evidence type="ECO:0000255" key="4">
    <source>
        <dbReference type="PROSITE-ProRule" id="PRU01364"/>
    </source>
</evidence>
<evidence type="ECO:0000305" key="5"/>
<accession>D4N3P2</accession>
<proteinExistence type="inferred from homology"/>
<sequence length="280" mass="32665">MSNSTVRRFCFTWNNYTELNYALCQEFIKKYCKYGIVGKELAPTTNTPHLQGFCNLQKPMRFSTIKKRLDNGIHIEKSMGSDTQNQTYCSKSGEFFEAGDPQCQGKRNDLQSVVDTIQAGNGSLSSIANEHPTAYIRYFRGIQEYIKTVRPIPPRYHKTEVRYYHGPPGSGKSRRALEEATALASDLNDIYYKPRGTWWDGYKQQSCVIIDDFYGWIKYDEMLKICDRYPYKVQIKGGFEEFTSKYIWITSNIDTNLLYKFNDYNDTAFVRRIEIKLLIE</sequence>